<keyword id="KW-0067">ATP-binding</keyword>
<keyword id="KW-0143">Chaperone</keyword>
<keyword id="KW-0963">Cytoplasm</keyword>
<keyword id="KW-0413">Isomerase</keyword>
<keyword id="KW-0547">Nucleotide-binding</keyword>
<keyword id="KW-1185">Reference proteome</keyword>
<dbReference type="EC" id="5.6.1.7" evidence="1"/>
<dbReference type="EMBL" id="AL935263">
    <property type="protein sequence ID" value="CCC78198.1"/>
    <property type="molecule type" value="Genomic_DNA"/>
</dbReference>
<dbReference type="RefSeq" id="WP_003640986.1">
    <property type="nucleotide sequence ID" value="NC_004567.2"/>
</dbReference>
<dbReference type="RefSeq" id="YP_004888712.1">
    <property type="nucleotide sequence ID" value="NC_004567.2"/>
</dbReference>
<dbReference type="SMR" id="Q88YM5"/>
<dbReference type="STRING" id="220668.lp_0728"/>
<dbReference type="EnsemblBacteria" id="CCC78198">
    <property type="protein sequence ID" value="CCC78198"/>
    <property type="gene ID" value="lp_0728"/>
</dbReference>
<dbReference type="GeneID" id="89668299"/>
<dbReference type="KEGG" id="lpl:lp_0728"/>
<dbReference type="PATRIC" id="fig|220668.9.peg.613"/>
<dbReference type="eggNOG" id="COG0459">
    <property type="taxonomic scope" value="Bacteria"/>
</dbReference>
<dbReference type="HOGENOM" id="CLU_016503_3_0_9"/>
<dbReference type="OrthoDB" id="9766614at2"/>
<dbReference type="PhylomeDB" id="Q88YM5"/>
<dbReference type="Proteomes" id="UP000000432">
    <property type="component" value="Chromosome"/>
</dbReference>
<dbReference type="GO" id="GO:0005737">
    <property type="term" value="C:cytoplasm"/>
    <property type="evidence" value="ECO:0007669"/>
    <property type="project" value="UniProtKB-SubCell"/>
</dbReference>
<dbReference type="GO" id="GO:0005524">
    <property type="term" value="F:ATP binding"/>
    <property type="evidence" value="ECO:0007669"/>
    <property type="project" value="UniProtKB-UniRule"/>
</dbReference>
<dbReference type="GO" id="GO:0140662">
    <property type="term" value="F:ATP-dependent protein folding chaperone"/>
    <property type="evidence" value="ECO:0007669"/>
    <property type="project" value="InterPro"/>
</dbReference>
<dbReference type="GO" id="GO:0016853">
    <property type="term" value="F:isomerase activity"/>
    <property type="evidence" value="ECO:0007669"/>
    <property type="project" value="UniProtKB-KW"/>
</dbReference>
<dbReference type="GO" id="GO:0051082">
    <property type="term" value="F:unfolded protein binding"/>
    <property type="evidence" value="ECO:0007669"/>
    <property type="project" value="UniProtKB-UniRule"/>
</dbReference>
<dbReference type="GO" id="GO:0042026">
    <property type="term" value="P:protein refolding"/>
    <property type="evidence" value="ECO:0007669"/>
    <property type="project" value="UniProtKB-UniRule"/>
</dbReference>
<dbReference type="CDD" id="cd03344">
    <property type="entry name" value="GroEL"/>
    <property type="match status" value="1"/>
</dbReference>
<dbReference type="FunFam" id="3.50.7.10:FF:000001">
    <property type="entry name" value="60 kDa chaperonin"/>
    <property type="match status" value="1"/>
</dbReference>
<dbReference type="Gene3D" id="3.50.7.10">
    <property type="entry name" value="GroEL"/>
    <property type="match status" value="1"/>
</dbReference>
<dbReference type="Gene3D" id="1.10.560.10">
    <property type="entry name" value="GroEL-like equatorial domain"/>
    <property type="match status" value="1"/>
</dbReference>
<dbReference type="Gene3D" id="3.30.260.10">
    <property type="entry name" value="TCP-1-like chaperonin intermediate domain"/>
    <property type="match status" value="1"/>
</dbReference>
<dbReference type="HAMAP" id="MF_00600">
    <property type="entry name" value="CH60"/>
    <property type="match status" value="1"/>
</dbReference>
<dbReference type="InterPro" id="IPR018370">
    <property type="entry name" value="Chaperonin_Cpn60_CS"/>
</dbReference>
<dbReference type="InterPro" id="IPR001844">
    <property type="entry name" value="Cpn60/GroEL"/>
</dbReference>
<dbReference type="InterPro" id="IPR002423">
    <property type="entry name" value="Cpn60/GroEL/TCP-1"/>
</dbReference>
<dbReference type="InterPro" id="IPR027409">
    <property type="entry name" value="GroEL-like_apical_dom_sf"/>
</dbReference>
<dbReference type="InterPro" id="IPR027413">
    <property type="entry name" value="GROEL-like_equatorial_sf"/>
</dbReference>
<dbReference type="InterPro" id="IPR027410">
    <property type="entry name" value="TCP-1-like_intermed_sf"/>
</dbReference>
<dbReference type="NCBIfam" id="TIGR02348">
    <property type="entry name" value="GroEL"/>
    <property type="match status" value="1"/>
</dbReference>
<dbReference type="NCBIfam" id="NF000592">
    <property type="entry name" value="PRK00013.1"/>
    <property type="match status" value="1"/>
</dbReference>
<dbReference type="NCBIfam" id="NF009487">
    <property type="entry name" value="PRK12849.1"/>
    <property type="match status" value="1"/>
</dbReference>
<dbReference type="NCBIfam" id="NF009488">
    <property type="entry name" value="PRK12850.1"/>
    <property type="match status" value="1"/>
</dbReference>
<dbReference type="NCBIfam" id="NF009489">
    <property type="entry name" value="PRK12851.1"/>
    <property type="match status" value="1"/>
</dbReference>
<dbReference type="PANTHER" id="PTHR45633">
    <property type="entry name" value="60 KDA HEAT SHOCK PROTEIN, MITOCHONDRIAL"/>
    <property type="match status" value="1"/>
</dbReference>
<dbReference type="Pfam" id="PF00118">
    <property type="entry name" value="Cpn60_TCP1"/>
    <property type="match status" value="1"/>
</dbReference>
<dbReference type="PRINTS" id="PR00298">
    <property type="entry name" value="CHAPERONIN60"/>
</dbReference>
<dbReference type="SUPFAM" id="SSF52029">
    <property type="entry name" value="GroEL apical domain-like"/>
    <property type="match status" value="1"/>
</dbReference>
<dbReference type="SUPFAM" id="SSF48592">
    <property type="entry name" value="GroEL equatorial domain-like"/>
    <property type="match status" value="2"/>
</dbReference>
<dbReference type="PROSITE" id="PS00296">
    <property type="entry name" value="CHAPERONINS_CPN60"/>
    <property type="match status" value="1"/>
</dbReference>
<name>CH60_LACPL</name>
<evidence type="ECO:0000255" key="1">
    <source>
        <dbReference type="HAMAP-Rule" id="MF_00600"/>
    </source>
</evidence>
<evidence type="ECO:0000256" key="2">
    <source>
        <dbReference type="SAM" id="MobiDB-lite"/>
    </source>
</evidence>
<feature type="chain" id="PRO_0000063402" description="Chaperonin GroEL">
    <location>
        <begin position="1"/>
        <end position="541"/>
    </location>
</feature>
<feature type="region of interest" description="Disordered" evidence="2">
    <location>
        <begin position="521"/>
        <end position="541"/>
    </location>
</feature>
<feature type="compositionally biased region" description="Low complexity" evidence="2">
    <location>
        <begin position="525"/>
        <end position="535"/>
    </location>
</feature>
<feature type="binding site" evidence="1">
    <location>
        <begin position="29"/>
        <end position="32"/>
    </location>
    <ligand>
        <name>ATP</name>
        <dbReference type="ChEBI" id="CHEBI:30616"/>
    </ligand>
</feature>
<feature type="binding site" evidence="1">
    <location>
        <begin position="86"/>
        <end position="90"/>
    </location>
    <ligand>
        <name>ATP</name>
        <dbReference type="ChEBI" id="CHEBI:30616"/>
    </ligand>
</feature>
<feature type="binding site" evidence="1">
    <location>
        <position position="413"/>
    </location>
    <ligand>
        <name>ATP</name>
        <dbReference type="ChEBI" id="CHEBI:30616"/>
    </ligand>
</feature>
<feature type="binding site" evidence="1">
    <location>
        <begin position="476"/>
        <end position="478"/>
    </location>
    <ligand>
        <name>ATP</name>
        <dbReference type="ChEBI" id="CHEBI:30616"/>
    </ligand>
</feature>
<feature type="binding site" evidence="1">
    <location>
        <position position="492"/>
    </location>
    <ligand>
        <name>ATP</name>
        <dbReference type="ChEBI" id="CHEBI:30616"/>
    </ligand>
</feature>
<sequence>MAKELKFSEDARSAMLKGVDQLADTVKSTLGPKGRNVVLEQSYGSPTITNDGVTIAKAIELDDHFENMGAKLVSEVASKTNDIAGDGTTTATVLTQSIVNEGMKNVTAGANPVGIRRGIEEATKTAVDSLHAMAHEVKTQEDIAQIASVSSASEETGKLIAEAMEKVGHDGVITIEESRGVDTSLDVVEGMQFDRGYLSQYMVTDNDKMEADLDNPYILITDKKISNIQDILPLLQSIVEQGKPLLIIADDISGEALPTLVLNKMRGTFNVVAVKAPGFGDRRKEQLQDIAILTGGTVITDDLGLELKDTTIDQLGQANKVTVTKDNTTIVEGAGSKDAISERVEFIRNQIGETTSDFDKEKLQERLAKLAGGVAVVRVGAATETELKERKYRIEDALNATRAAVEEGFVAGGGTALINVIKDVAALKETGDVQTGINIVKRALEEPVRQIAENAGLEGSVIVEKMKEQKPGVGFNAATDEWVDMIKAGIVDPTKVTRSALQNAASVSALLLTTEAVVAEKPEENAPAAPAAPNPGMGGMM</sequence>
<organism>
    <name type="scientific">Lactiplantibacillus plantarum (strain ATCC BAA-793 / NCIMB 8826 / WCFS1)</name>
    <name type="common">Lactobacillus plantarum</name>
    <dbReference type="NCBI Taxonomy" id="220668"/>
    <lineage>
        <taxon>Bacteria</taxon>
        <taxon>Bacillati</taxon>
        <taxon>Bacillota</taxon>
        <taxon>Bacilli</taxon>
        <taxon>Lactobacillales</taxon>
        <taxon>Lactobacillaceae</taxon>
        <taxon>Lactiplantibacillus</taxon>
    </lineage>
</organism>
<protein>
    <recommendedName>
        <fullName evidence="1">Chaperonin GroEL</fullName>
        <ecNumber evidence="1">5.6.1.7</ecNumber>
    </recommendedName>
    <alternativeName>
        <fullName evidence="1">60 kDa chaperonin</fullName>
    </alternativeName>
    <alternativeName>
        <fullName evidence="1">Chaperonin-60</fullName>
        <shortName evidence="1">Cpn60</shortName>
    </alternativeName>
</protein>
<gene>
    <name evidence="1" type="primary">groEL</name>
    <name evidence="1" type="synonym">groL</name>
    <name type="ordered locus">lp_0728</name>
</gene>
<proteinExistence type="inferred from homology"/>
<reference key="1">
    <citation type="journal article" date="2003" name="Proc. Natl. Acad. Sci. U.S.A.">
        <title>Complete genome sequence of Lactobacillus plantarum WCFS1.</title>
        <authorList>
            <person name="Kleerebezem M."/>
            <person name="Boekhorst J."/>
            <person name="van Kranenburg R."/>
            <person name="Molenaar D."/>
            <person name="Kuipers O.P."/>
            <person name="Leer R."/>
            <person name="Tarchini R."/>
            <person name="Peters S.A."/>
            <person name="Sandbrink H.M."/>
            <person name="Fiers M.W.E.J."/>
            <person name="Stiekema W."/>
            <person name="Klein Lankhorst R.M."/>
            <person name="Bron P.A."/>
            <person name="Hoffer S.M."/>
            <person name="Nierop Groot M.N."/>
            <person name="Kerkhoven R."/>
            <person name="De Vries M."/>
            <person name="Ursing B."/>
            <person name="De Vos W.M."/>
            <person name="Siezen R.J."/>
        </authorList>
    </citation>
    <scope>NUCLEOTIDE SEQUENCE [LARGE SCALE GENOMIC DNA]</scope>
    <source>
        <strain>ATCC BAA-793 / NCIMB 8826 / WCFS1</strain>
    </source>
</reference>
<reference key="2">
    <citation type="journal article" date="2012" name="J. Bacteriol.">
        <title>Complete resequencing and reannotation of the Lactobacillus plantarum WCFS1 genome.</title>
        <authorList>
            <person name="Siezen R.J."/>
            <person name="Francke C."/>
            <person name="Renckens B."/>
            <person name="Boekhorst J."/>
            <person name="Wels M."/>
            <person name="Kleerebezem M."/>
            <person name="van Hijum S.A."/>
        </authorList>
    </citation>
    <scope>NUCLEOTIDE SEQUENCE [LARGE SCALE GENOMIC DNA]</scope>
    <scope>GENOME REANNOTATION</scope>
    <source>
        <strain>ATCC BAA-793 / NCIMB 8826 / WCFS1</strain>
    </source>
</reference>
<accession>Q88YM5</accession>
<accession>F9ULV9</accession>
<comment type="function">
    <text evidence="1">Together with its co-chaperonin GroES, plays an essential role in assisting protein folding. The GroEL-GroES system forms a nano-cage that allows encapsulation of the non-native substrate proteins and provides a physical environment optimized to promote and accelerate protein folding.</text>
</comment>
<comment type="catalytic activity">
    <reaction evidence="1">
        <text>ATP + H2O + a folded polypeptide = ADP + phosphate + an unfolded polypeptide.</text>
        <dbReference type="EC" id="5.6.1.7"/>
    </reaction>
</comment>
<comment type="subunit">
    <text evidence="1">Forms a cylinder of 14 subunits composed of two heptameric rings stacked back-to-back. Interacts with the co-chaperonin GroES.</text>
</comment>
<comment type="subcellular location">
    <subcellularLocation>
        <location evidence="1">Cytoplasm</location>
    </subcellularLocation>
</comment>
<comment type="similarity">
    <text evidence="1">Belongs to the chaperonin (HSP60) family.</text>
</comment>